<accession>P22544</accession>
<accession>Q23838</accession>
<keyword id="KW-0217">Developmental protein</keyword>
<keyword id="KW-0238">DNA-binding</keyword>
<keyword id="KW-0371">Homeobox</keyword>
<keyword id="KW-0539">Nucleus</keyword>
<keyword id="KW-0716">Sensory transduction</keyword>
<keyword id="KW-0844">Vision</keyword>
<feature type="chain" id="PRO_0000049004" description="Homeobox protein B-H1">
    <location>
        <begin position="1"/>
        <end position="606"/>
    </location>
</feature>
<feature type="DNA-binding region" description="Homeobox" evidence="2">
    <location>
        <begin position="331"/>
        <end position="390"/>
    </location>
</feature>
<feature type="region of interest" description="Disordered" evidence="3">
    <location>
        <begin position="1"/>
        <end position="65"/>
    </location>
</feature>
<feature type="region of interest" description="Disordered" evidence="3">
    <location>
        <begin position="104"/>
        <end position="188"/>
    </location>
</feature>
<feature type="region of interest" description="Disordered" evidence="3">
    <location>
        <begin position="261"/>
        <end position="340"/>
    </location>
</feature>
<feature type="region of interest" description="Disordered" evidence="3">
    <location>
        <begin position="508"/>
        <end position="606"/>
    </location>
</feature>
<feature type="compositionally biased region" description="Polar residues" evidence="3">
    <location>
        <begin position="1"/>
        <end position="14"/>
    </location>
</feature>
<feature type="compositionally biased region" description="Basic residues" evidence="3">
    <location>
        <begin position="21"/>
        <end position="40"/>
    </location>
</feature>
<feature type="compositionally biased region" description="Low complexity" evidence="3">
    <location>
        <begin position="41"/>
        <end position="65"/>
    </location>
</feature>
<feature type="compositionally biased region" description="Basic residues" evidence="3">
    <location>
        <begin position="108"/>
        <end position="118"/>
    </location>
</feature>
<feature type="compositionally biased region" description="Low complexity" evidence="3">
    <location>
        <begin position="119"/>
        <end position="138"/>
    </location>
</feature>
<feature type="compositionally biased region" description="Basic residues" evidence="3">
    <location>
        <begin position="166"/>
        <end position="188"/>
    </location>
</feature>
<feature type="compositionally biased region" description="Acidic residues" evidence="3">
    <location>
        <begin position="266"/>
        <end position="284"/>
    </location>
</feature>
<feature type="compositionally biased region" description="Gly residues" evidence="3">
    <location>
        <begin position="286"/>
        <end position="295"/>
    </location>
</feature>
<feature type="compositionally biased region" description="Basic and acidic residues" evidence="3">
    <location>
        <begin position="297"/>
        <end position="314"/>
    </location>
</feature>
<feature type="compositionally biased region" description="Polar residues" evidence="3">
    <location>
        <begin position="315"/>
        <end position="325"/>
    </location>
</feature>
<feature type="compositionally biased region" description="Pro residues" evidence="3">
    <location>
        <begin position="513"/>
        <end position="522"/>
    </location>
</feature>
<feature type="compositionally biased region" description="Low complexity" evidence="3">
    <location>
        <begin position="523"/>
        <end position="534"/>
    </location>
</feature>
<feature type="compositionally biased region" description="Pro residues" evidence="3">
    <location>
        <begin position="561"/>
        <end position="576"/>
    </location>
</feature>
<feature type="sequence conflict" description="In Ref. 2; AAA28381." evidence="6" ref="2">
    <original>TS</original>
    <variation>QG</variation>
    <location>
        <begin position="132"/>
        <end position="133"/>
    </location>
</feature>
<feature type="sequence conflict" description="In Ref. 2; AAA28381." evidence="6" ref="2">
    <original>P</original>
    <variation>S</variation>
    <location>
        <position position="178"/>
    </location>
</feature>
<feature type="sequence conflict" description="In Ref. 2; AAA28381." evidence="6" ref="2">
    <original>H</original>
    <variation>P</variation>
    <location>
        <position position="193"/>
    </location>
</feature>
<feature type="sequence conflict" description="In Ref. 2; AAA28381." evidence="6" ref="2">
    <original>GGSAGGGG</original>
    <variation>AAARRRR</variation>
    <location>
        <begin position="285"/>
        <end position="292"/>
    </location>
</feature>
<feature type="sequence conflict" description="In Ref. 2; AAA28381." evidence="6" ref="2">
    <original>D</original>
    <variation>A</variation>
    <location>
        <position position="312"/>
    </location>
</feature>
<feature type="sequence conflict" description="In Ref. 2; AAA28381." evidence="6" ref="2">
    <original>K</original>
    <variation>E</variation>
    <location>
        <position position="317"/>
    </location>
</feature>
<feature type="sequence conflict" description="In Ref. 2; AAA28381." evidence="6" ref="2">
    <original>S</original>
    <variation>R</variation>
    <location>
        <position position="328"/>
    </location>
</feature>
<feature type="sequence conflict" description="In Ref. 2; AAA28381." evidence="6" ref="2">
    <original>A</original>
    <variation>S</variation>
    <location>
        <position position="365"/>
    </location>
</feature>
<feature type="sequence conflict" description="In Ref. 2; AAA28381." evidence="6" ref="2">
    <original>M</original>
    <variation>K</variation>
    <location>
        <position position="387"/>
    </location>
</feature>
<feature type="sequence conflict" description="In Ref. 2; AAA28381." evidence="6" ref="2">
    <location>
        <position position="450"/>
    </location>
</feature>
<feature type="sequence conflict" description="In Ref. 2; AAA28381." evidence="6" ref="2">
    <original>AAAA</original>
    <variation>GGGG</variation>
    <location>
        <begin position="524"/>
        <end position="527"/>
    </location>
</feature>
<feature type="sequence conflict" description="In Ref. 2; AAA28381." evidence="6" ref="2">
    <original>I</original>
    <variation>S</variation>
    <location>
        <position position="535"/>
    </location>
</feature>
<feature type="sequence conflict" description="In Ref. 2; AAA28381." evidence="6" ref="2">
    <original>AGSPTGG</original>
    <variation>RAAPPAV</variation>
    <location>
        <begin position="543"/>
        <end position="549"/>
    </location>
</feature>
<sequence>MKDSMSILTQTPSETPAAHSQLHHHLSHHHHPALHHHPVLQHHYSLQQQHQQQQQQQPPAPPAVATTTVVNMSGSTTTAANLKPNRSRFMINDILAGSAAAAFYKQQQQHHHHHHQSHHNNNNHSGGSSGGTSPTHHNNNNGEGFEPPSGGAGAGAGAAAPPPPLHHLHPQSHPHPHPHPHSHPHPHALVHPHAKLAAGGGAANGLNVAQYAAAMQQHYAAAAAAAAARNSAAAAAAAAAAAASAAAAGGGGGGGLGVGGAPAGAELDDSSDYHEENEDCDSDEGGSAGGGGGGSNHMDDHSVCSNGGKDDDGNSIKSGSTSDMSGLSKKQRKARTAFTDHQLQTLEKSFERQKYLSVQERQELAHKLDLSDCQVKTWYQNRRTKWMRQTAVGLELLAEAGNFAAFQRLYGGSPYLGAWPYAAAAGAGAAAAAAHGATPHTSIDIYYRQAAAAAAMQKPLPYNLYAGVPNVGVGVGVGVGPAPFSHLSASSSLSSLSSYYQSAAAAAAAANPGGPPPPPPPSSAAAATGGSPSPIGGLIKPLAGSPTGGMPPHHPSRPDSASPPLPLPLARPPSTPSPTLNPGSPPGRSVDSCSQAQSDDEDQIQV</sequence>
<dbReference type="EMBL" id="X56682">
    <property type="protein sequence ID" value="CAA40011.1"/>
    <property type="molecule type" value="Genomic_DNA"/>
</dbReference>
<dbReference type="EMBL" id="M59963">
    <property type="protein sequence ID" value="AAA28381.1"/>
    <property type="molecule type" value="Genomic_DNA"/>
</dbReference>
<dbReference type="EMBL" id="M59962">
    <property type="protein sequence ID" value="AAA28381.1"/>
    <property type="status" value="JOINED"/>
    <property type="molecule type" value="Genomic_DNA"/>
</dbReference>
<dbReference type="PIR" id="A39369">
    <property type="entry name" value="A39369"/>
</dbReference>
<dbReference type="PIR" id="S13367">
    <property type="entry name" value="S13367"/>
</dbReference>
<dbReference type="SMR" id="P22544"/>
<dbReference type="eggNOG" id="KOG0488">
    <property type="taxonomic scope" value="Eukaryota"/>
</dbReference>
<dbReference type="OrthoDB" id="6159439at2759"/>
<dbReference type="GO" id="GO:0005634">
    <property type="term" value="C:nucleus"/>
    <property type="evidence" value="ECO:0007669"/>
    <property type="project" value="UniProtKB-SubCell"/>
</dbReference>
<dbReference type="GO" id="GO:0000981">
    <property type="term" value="F:DNA-binding transcription factor activity, RNA polymerase II-specific"/>
    <property type="evidence" value="ECO:0007669"/>
    <property type="project" value="EnsemblMetazoa"/>
</dbReference>
<dbReference type="GO" id="GO:0000978">
    <property type="term" value="F:RNA polymerase II cis-regulatory region sequence-specific DNA binding"/>
    <property type="evidence" value="ECO:0007669"/>
    <property type="project" value="TreeGrafter"/>
</dbReference>
<dbReference type="GO" id="GO:0008407">
    <property type="term" value="P:chaeta morphogenesis"/>
    <property type="evidence" value="ECO:0007669"/>
    <property type="project" value="EnsemblMetazoa"/>
</dbReference>
<dbReference type="GO" id="GO:0001751">
    <property type="term" value="P:compound eye photoreceptor cell differentiation"/>
    <property type="evidence" value="ECO:0007669"/>
    <property type="project" value="EnsemblMetazoa"/>
</dbReference>
<dbReference type="GO" id="GO:0008057">
    <property type="term" value="P:eye pigment granule organization"/>
    <property type="evidence" value="ECO:0007669"/>
    <property type="project" value="EnsemblMetazoa"/>
</dbReference>
<dbReference type="GO" id="GO:0007455">
    <property type="term" value="P:eye-antennal disc morphogenesis"/>
    <property type="evidence" value="ECO:0007669"/>
    <property type="project" value="EnsemblMetazoa"/>
</dbReference>
<dbReference type="GO" id="GO:0007479">
    <property type="term" value="P:leg disc proximal/distal pattern formation"/>
    <property type="evidence" value="ECO:0007669"/>
    <property type="project" value="EnsemblMetazoa"/>
</dbReference>
<dbReference type="GO" id="GO:0000122">
    <property type="term" value="P:negative regulation of transcription by RNA polymerase II"/>
    <property type="evidence" value="ECO:0007669"/>
    <property type="project" value="EnsemblMetazoa"/>
</dbReference>
<dbReference type="GO" id="GO:0008052">
    <property type="term" value="P:sensory organ boundary specification"/>
    <property type="evidence" value="ECO:0007669"/>
    <property type="project" value="EnsemblMetazoa"/>
</dbReference>
<dbReference type="GO" id="GO:0007601">
    <property type="term" value="P:visual perception"/>
    <property type="evidence" value="ECO:0007669"/>
    <property type="project" value="UniProtKB-KW"/>
</dbReference>
<dbReference type="CDD" id="cd00086">
    <property type="entry name" value="homeodomain"/>
    <property type="match status" value="1"/>
</dbReference>
<dbReference type="Gene3D" id="1.10.10.60">
    <property type="entry name" value="Homeodomain-like"/>
    <property type="match status" value="1"/>
</dbReference>
<dbReference type="InterPro" id="IPR001356">
    <property type="entry name" value="HD"/>
</dbReference>
<dbReference type="InterPro" id="IPR017970">
    <property type="entry name" value="Homeobox_CS"/>
</dbReference>
<dbReference type="InterPro" id="IPR050394">
    <property type="entry name" value="Homeobox_NK-like"/>
</dbReference>
<dbReference type="InterPro" id="IPR009057">
    <property type="entry name" value="Homeodomain-like_sf"/>
</dbReference>
<dbReference type="PANTHER" id="PTHR24340:SF109">
    <property type="entry name" value="BARH LIKE HOMEOBOX 1"/>
    <property type="match status" value="1"/>
</dbReference>
<dbReference type="PANTHER" id="PTHR24340">
    <property type="entry name" value="HOMEOBOX PROTEIN NKX"/>
    <property type="match status" value="1"/>
</dbReference>
<dbReference type="Pfam" id="PF00046">
    <property type="entry name" value="Homeodomain"/>
    <property type="match status" value="1"/>
</dbReference>
<dbReference type="SMART" id="SM00389">
    <property type="entry name" value="HOX"/>
    <property type="match status" value="1"/>
</dbReference>
<dbReference type="SUPFAM" id="SSF46689">
    <property type="entry name" value="Homeodomain-like"/>
    <property type="match status" value="1"/>
</dbReference>
<dbReference type="PROSITE" id="PS00027">
    <property type="entry name" value="HOMEOBOX_1"/>
    <property type="match status" value="1"/>
</dbReference>
<dbReference type="PROSITE" id="PS50071">
    <property type="entry name" value="HOMEOBOX_2"/>
    <property type="match status" value="1"/>
</dbReference>
<reference key="1">
    <citation type="journal article" date="1991" name="EMBO J.">
        <title>Retrotransposon-induced overexpression of a homeobox gene causes defects in eye morphogenesis in Drosophila.</title>
        <authorList>
            <person name="Tanda S."/>
            <person name="Corces V.G."/>
        </authorList>
    </citation>
    <scope>NUCLEOTIDE SEQUENCE [GENOMIC DNA]</scope>
    <scope>TISSUE SPECIFICITY</scope>
    <scope>DEVELOPMENTAL STAGE</scope>
    <source>
        <tissue>Eye-antennal disk</tissue>
    </source>
</reference>
<reference key="2">
    <citation type="journal article" date="1991" name="Proc. Natl. Acad. Sci. U.S.A.">
        <title>Identification of a different-type homeobox gene, BarH1, possibly causing Bar (B) and Om(1D) mutations in Drosophila.</title>
        <authorList>
            <person name="Saigo K."/>
            <person name="Emori Y."/>
            <person name="Sone M."/>
            <person name="Akimaru H."/>
            <person name="Takayama E."/>
            <person name="Higashijima S."/>
            <person name="Ishimaru S."/>
            <person name="Kojima T."/>
        </authorList>
    </citation>
    <scope>NUCLEOTIDE SEQUENCE [GENOMIC DNA]</scope>
    <scope>DEVELOPMENTAL STAGE</scope>
</reference>
<gene>
    <name type="primary">B-H1</name>
    <name type="synonym">BarH1</name>
    <name type="synonym">OM(1D)</name>
</gene>
<proteinExistence type="evidence at transcript level"/>
<comment type="function">
    <text evidence="1">Functionally required in R1 and R6 receptor cells and primary pigment cells for normal eye development.</text>
</comment>
<comment type="subcellular location">
    <subcellularLocation>
        <location evidence="2">Nucleus</location>
    </subcellularLocation>
</comment>
<comment type="tissue specificity">
    <text evidence="4">Abundant in the eye-antenna imaginal disk.</text>
</comment>
<comment type="developmental stage">
    <text evidence="4 5">Expressed at high levels throughout development, lowest level is in larvae.</text>
</comment>
<comment type="similarity">
    <text evidence="6">Belongs to the Antp homeobox family.</text>
</comment>
<organism>
    <name type="scientific">Drosophila ananassae</name>
    <name type="common">Fruit fly</name>
    <dbReference type="NCBI Taxonomy" id="7217"/>
    <lineage>
        <taxon>Eukaryota</taxon>
        <taxon>Metazoa</taxon>
        <taxon>Ecdysozoa</taxon>
        <taxon>Arthropoda</taxon>
        <taxon>Hexapoda</taxon>
        <taxon>Insecta</taxon>
        <taxon>Pterygota</taxon>
        <taxon>Neoptera</taxon>
        <taxon>Endopterygota</taxon>
        <taxon>Diptera</taxon>
        <taxon>Brachycera</taxon>
        <taxon>Muscomorpha</taxon>
        <taxon>Ephydroidea</taxon>
        <taxon>Drosophilidae</taxon>
        <taxon>Drosophila</taxon>
        <taxon>Sophophora</taxon>
    </lineage>
</organism>
<name>BARH1_DROAN</name>
<protein>
    <recommendedName>
        <fullName>Homeobox protein B-H1</fullName>
    </recommendedName>
    <alternativeName>
        <fullName>Homeobox BarH1 protein</fullName>
    </alternativeName>
</protein>
<evidence type="ECO:0000250" key="1"/>
<evidence type="ECO:0000255" key="2">
    <source>
        <dbReference type="PROSITE-ProRule" id="PRU00108"/>
    </source>
</evidence>
<evidence type="ECO:0000256" key="3">
    <source>
        <dbReference type="SAM" id="MobiDB-lite"/>
    </source>
</evidence>
<evidence type="ECO:0000269" key="4">
    <source>
    </source>
</evidence>
<evidence type="ECO:0000269" key="5">
    <source>
    </source>
</evidence>
<evidence type="ECO:0000305" key="6"/>